<sequence length="155" mass="17963">MRRRRAEIRQVPPDPVYGDVLVAKLINKVMWDGKKTTAQKIVYGAFDIIREKTKKDPLEVFRQAVENVKPVLEVRPRRVGGATYQVPIEVQEPRRTSLALRWIVEAARARKGRPMKEKLAEEIIAAYNNTGTAIKKKEDTHRMAEANRAFAHYRW</sequence>
<proteinExistence type="inferred from homology"/>
<name>RS7_THEP1</name>
<evidence type="ECO:0000255" key="1">
    <source>
        <dbReference type="HAMAP-Rule" id="MF_00480"/>
    </source>
</evidence>
<evidence type="ECO:0000305" key="2"/>
<reference key="1">
    <citation type="submission" date="2007-05" db="EMBL/GenBank/DDBJ databases">
        <title>Complete sequence of Thermotoga petrophila RKU-1.</title>
        <authorList>
            <consortium name="US DOE Joint Genome Institute"/>
            <person name="Copeland A."/>
            <person name="Lucas S."/>
            <person name="Lapidus A."/>
            <person name="Barry K."/>
            <person name="Glavina del Rio T."/>
            <person name="Dalin E."/>
            <person name="Tice H."/>
            <person name="Pitluck S."/>
            <person name="Sims D."/>
            <person name="Brettin T."/>
            <person name="Bruce D."/>
            <person name="Detter J.C."/>
            <person name="Han C."/>
            <person name="Tapia R."/>
            <person name="Schmutz J."/>
            <person name="Larimer F."/>
            <person name="Land M."/>
            <person name="Hauser L."/>
            <person name="Kyrpides N."/>
            <person name="Mikhailova N."/>
            <person name="Nelson K."/>
            <person name="Gogarten J.P."/>
            <person name="Noll K."/>
            <person name="Richardson P."/>
        </authorList>
    </citation>
    <scope>NUCLEOTIDE SEQUENCE [LARGE SCALE GENOMIC DNA]</scope>
    <source>
        <strain>ATCC BAA-488 / DSM 13995 / JCM 10881 / RKU-1</strain>
    </source>
</reference>
<protein>
    <recommendedName>
        <fullName evidence="1">Small ribosomal subunit protein uS7</fullName>
    </recommendedName>
    <alternativeName>
        <fullName evidence="2">30S ribosomal protein S7</fullName>
    </alternativeName>
</protein>
<keyword id="KW-0687">Ribonucleoprotein</keyword>
<keyword id="KW-0689">Ribosomal protein</keyword>
<keyword id="KW-0694">RNA-binding</keyword>
<keyword id="KW-0699">rRNA-binding</keyword>
<keyword id="KW-0820">tRNA-binding</keyword>
<dbReference type="EMBL" id="CP000702">
    <property type="protein sequence ID" value="ABQ47302.1"/>
    <property type="molecule type" value="Genomic_DNA"/>
</dbReference>
<dbReference type="RefSeq" id="WP_011943782.1">
    <property type="nucleotide sequence ID" value="NC_009486.1"/>
</dbReference>
<dbReference type="SMR" id="A5IM79"/>
<dbReference type="STRING" id="390874.Tpet_1288"/>
<dbReference type="KEGG" id="tpt:Tpet_1288"/>
<dbReference type="eggNOG" id="COG0049">
    <property type="taxonomic scope" value="Bacteria"/>
</dbReference>
<dbReference type="HOGENOM" id="CLU_072226_1_1_0"/>
<dbReference type="Proteomes" id="UP000006558">
    <property type="component" value="Chromosome"/>
</dbReference>
<dbReference type="GO" id="GO:0015935">
    <property type="term" value="C:small ribosomal subunit"/>
    <property type="evidence" value="ECO:0007669"/>
    <property type="project" value="InterPro"/>
</dbReference>
<dbReference type="GO" id="GO:0019843">
    <property type="term" value="F:rRNA binding"/>
    <property type="evidence" value="ECO:0007669"/>
    <property type="project" value="UniProtKB-UniRule"/>
</dbReference>
<dbReference type="GO" id="GO:0003735">
    <property type="term" value="F:structural constituent of ribosome"/>
    <property type="evidence" value="ECO:0007669"/>
    <property type="project" value="InterPro"/>
</dbReference>
<dbReference type="GO" id="GO:0000049">
    <property type="term" value="F:tRNA binding"/>
    <property type="evidence" value="ECO:0007669"/>
    <property type="project" value="UniProtKB-UniRule"/>
</dbReference>
<dbReference type="GO" id="GO:0006412">
    <property type="term" value="P:translation"/>
    <property type="evidence" value="ECO:0007669"/>
    <property type="project" value="UniProtKB-UniRule"/>
</dbReference>
<dbReference type="CDD" id="cd14869">
    <property type="entry name" value="uS7_Bacteria"/>
    <property type="match status" value="1"/>
</dbReference>
<dbReference type="FunFam" id="1.10.455.10:FF:000001">
    <property type="entry name" value="30S ribosomal protein S7"/>
    <property type="match status" value="1"/>
</dbReference>
<dbReference type="Gene3D" id="1.10.455.10">
    <property type="entry name" value="Ribosomal protein S7 domain"/>
    <property type="match status" value="1"/>
</dbReference>
<dbReference type="HAMAP" id="MF_00480_B">
    <property type="entry name" value="Ribosomal_uS7_B"/>
    <property type="match status" value="1"/>
</dbReference>
<dbReference type="InterPro" id="IPR000235">
    <property type="entry name" value="Ribosomal_uS7"/>
</dbReference>
<dbReference type="InterPro" id="IPR005717">
    <property type="entry name" value="Ribosomal_uS7_bac/org-type"/>
</dbReference>
<dbReference type="InterPro" id="IPR020606">
    <property type="entry name" value="Ribosomal_uS7_CS"/>
</dbReference>
<dbReference type="InterPro" id="IPR023798">
    <property type="entry name" value="Ribosomal_uS7_dom"/>
</dbReference>
<dbReference type="InterPro" id="IPR036823">
    <property type="entry name" value="Ribosomal_uS7_dom_sf"/>
</dbReference>
<dbReference type="NCBIfam" id="TIGR01029">
    <property type="entry name" value="rpsG_bact"/>
    <property type="match status" value="1"/>
</dbReference>
<dbReference type="PANTHER" id="PTHR11205">
    <property type="entry name" value="RIBOSOMAL PROTEIN S7"/>
    <property type="match status" value="1"/>
</dbReference>
<dbReference type="Pfam" id="PF00177">
    <property type="entry name" value="Ribosomal_S7"/>
    <property type="match status" value="1"/>
</dbReference>
<dbReference type="PIRSF" id="PIRSF002122">
    <property type="entry name" value="RPS7p_RPS7a_RPS5e_RPS7o"/>
    <property type="match status" value="1"/>
</dbReference>
<dbReference type="SUPFAM" id="SSF47973">
    <property type="entry name" value="Ribosomal protein S7"/>
    <property type="match status" value="1"/>
</dbReference>
<dbReference type="PROSITE" id="PS00052">
    <property type="entry name" value="RIBOSOMAL_S7"/>
    <property type="match status" value="1"/>
</dbReference>
<feature type="chain" id="PRO_1000014315" description="Small ribosomal subunit protein uS7">
    <location>
        <begin position="1"/>
        <end position="155"/>
    </location>
</feature>
<accession>A5IM79</accession>
<comment type="function">
    <text evidence="1">One of the primary rRNA binding proteins, it binds directly to 16S rRNA where it nucleates assembly of the head domain of the 30S subunit. Is located at the subunit interface close to the decoding center, probably blocks exit of the E-site tRNA.</text>
</comment>
<comment type="subunit">
    <text evidence="1">Part of the 30S ribosomal subunit. Contacts proteins S9 and S11.</text>
</comment>
<comment type="similarity">
    <text evidence="1">Belongs to the universal ribosomal protein uS7 family.</text>
</comment>
<organism>
    <name type="scientific">Thermotoga petrophila (strain ATCC BAA-488 / DSM 13995 / JCM 10881 / RKU-1)</name>
    <dbReference type="NCBI Taxonomy" id="390874"/>
    <lineage>
        <taxon>Bacteria</taxon>
        <taxon>Thermotogati</taxon>
        <taxon>Thermotogota</taxon>
        <taxon>Thermotogae</taxon>
        <taxon>Thermotogales</taxon>
        <taxon>Thermotogaceae</taxon>
        <taxon>Thermotoga</taxon>
    </lineage>
</organism>
<gene>
    <name evidence="1" type="primary">rpsG</name>
    <name type="ordered locus">Tpet_1288</name>
</gene>